<protein>
    <recommendedName>
        <fullName>Tumor necrosis factor receptor superfamily member 1A</fullName>
    </recommendedName>
    <alternativeName>
        <fullName>Tumor necrosis factor receptor 1</fullName>
        <shortName>TNF-R1</shortName>
    </alternativeName>
    <alternativeName>
        <fullName>Tumor necrosis factor receptor type I</fullName>
        <shortName>TNF-RI</shortName>
        <shortName>TNFR-I</shortName>
    </alternativeName>
    <alternativeName>
        <fullName>p55</fullName>
    </alternativeName>
    <alternativeName>
        <fullName>p60</fullName>
    </alternativeName>
    <cdAntigenName>CD120a</cdAntigenName>
</protein>
<proteinExistence type="evidence at transcript level"/>
<accession>O19131</accession>
<accession>Q2HJ72</accession>
<reference key="1">
    <citation type="journal article" date="1998" name="Vet. Immunol. Immunopathol.">
        <title>Cloning and sequencing of cDNA encoding bovine tumor necrosis factor (TNF)-receptor I.</title>
        <authorList>
            <person name="Lee E.-K."/>
            <person name="Kehrli M.E. Jr."/>
            <person name="Taylor M.J."/>
        </authorList>
    </citation>
    <scope>NUCLEOTIDE SEQUENCE [MRNA]</scope>
    <source>
        <tissue>Aorta</tissue>
    </source>
</reference>
<reference key="2">
    <citation type="submission" date="2006-02" db="EMBL/GenBank/DDBJ databases">
        <authorList>
            <consortium name="NIH - Mammalian Gene Collection (MGC) project"/>
        </authorList>
    </citation>
    <scope>NUCLEOTIDE SEQUENCE [LARGE SCALE MRNA]</scope>
    <source>
        <strain>Hereford</strain>
        <tissue>Uterus</tissue>
    </source>
</reference>
<evidence type="ECO:0000250" key="1"/>
<evidence type="ECO:0000250" key="2">
    <source>
        <dbReference type="UniProtKB" id="P19438"/>
    </source>
</evidence>
<evidence type="ECO:0000250" key="3">
    <source>
        <dbReference type="UniProtKB" id="P25118"/>
    </source>
</evidence>
<evidence type="ECO:0000255" key="4"/>
<evidence type="ECO:0000255" key="5">
    <source>
        <dbReference type="PROSITE-ProRule" id="PRU00064"/>
    </source>
</evidence>
<evidence type="ECO:0000255" key="6">
    <source>
        <dbReference type="PROSITE-ProRule" id="PRU00206"/>
    </source>
</evidence>
<keyword id="KW-0053">Apoptosis</keyword>
<keyword id="KW-1003">Cell membrane</keyword>
<keyword id="KW-1015">Disulfide bond</keyword>
<keyword id="KW-0325">Glycoprotein</keyword>
<keyword id="KW-0333">Golgi apparatus</keyword>
<keyword id="KW-0472">Membrane</keyword>
<keyword id="KW-0675">Receptor</keyword>
<keyword id="KW-1185">Reference proteome</keyword>
<keyword id="KW-0677">Repeat</keyword>
<keyword id="KW-0732">Signal</keyword>
<keyword id="KW-0812">Transmembrane</keyword>
<keyword id="KW-1133">Transmembrane helix</keyword>
<dbReference type="EMBL" id="U90937">
    <property type="protein sequence ID" value="AAB65143.1"/>
    <property type="molecule type" value="mRNA"/>
</dbReference>
<dbReference type="EMBL" id="BC113278">
    <property type="protein sequence ID" value="AAI13279.1"/>
    <property type="molecule type" value="mRNA"/>
</dbReference>
<dbReference type="RefSeq" id="NP_777099.1">
    <property type="nucleotide sequence ID" value="NM_174674.2"/>
</dbReference>
<dbReference type="SMR" id="O19131"/>
<dbReference type="FunCoup" id="O19131">
    <property type="interactions" value="891"/>
</dbReference>
<dbReference type="STRING" id="9913.ENSBTAP00000071830"/>
<dbReference type="GlyCosmos" id="O19131">
    <property type="glycosylation" value="3 sites, No reported glycans"/>
</dbReference>
<dbReference type="GlyGen" id="O19131">
    <property type="glycosylation" value="3 sites"/>
</dbReference>
<dbReference type="PaxDb" id="9913-ENSBTAP00000005522"/>
<dbReference type="GeneID" id="282527"/>
<dbReference type="KEGG" id="bta:282527"/>
<dbReference type="CTD" id="7132"/>
<dbReference type="eggNOG" id="ENOG502S050">
    <property type="taxonomic scope" value="Eukaryota"/>
</dbReference>
<dbReference type="InParanoid" id="O19131"/>
<dbReference type="OrthoDB" id="9408020at2759"/>
<dbReference type="Proteomes" id="UP000009136">
    <property type="component" value="Unplaced"/>
</dbReference>
<dbReference type="GO" id="GO:0000139">
    <property type="term" value="C:Golgi membrane"/>
    <property type="evidence" value="ECO:0000250"/>
    <property type="project" value="UniProtKB"/>
</dbReference>
<dbReference type="GO" id="GO:0045121">
    <property type="term" value="C:membrane raft"/>
    <property type="evidence" value="ECO:0000318"/>
    <property type="project" value="GO_Central"/>
</dbReference>
<dbReference type="GO" id="GO:0005886">
    <property type="term" value="C:plasma membrane"/>
    <property type="evidence" value="ECO:0007669"/>
    <property type="project" value="UniProtKB-SubCell"/>
</dbReference>
<dbReference type="GO" id="GO:0043235">
    <property type="term" value="C:receptor complex"/>
    <property type="evidence" value="ECO:0000318"/>
    <property type="project" value="GO_Central"/>
</dbReference>
<dbReference type="GO" id="GO:0043120">
    <property type="term" value="F:tumor necrosis factor binding"/>
    <property type="evidence" value="ECO:0000318"/>
    <property type="project" value="GO_Central"/>
</dbReference>
<dbReference type="GO" id="GO:0005031">
    <property type="term" value="F:tumor necrosis factor receptor activity"/>
    <property type="evidence" value="ECO:0000250"/>
    <property type="project" value="UniProtKB"/>
</dbReference>
<dbReference type="GO" id="GO:0006915">
    <property type="term" value="P:apoptotic process"/>
    <property type="evidence" value="ECO:0007669"/>
    <property type="project" value="UniProtKB-KW"/>
</dbReference>
<dbReference type="GO" id="GO:0007166">
    <property type="term" value="P:cell surface receptor signaling pathway"/>
    <property type="evidence" value="ECO:0000250"/>
    <property type="project" value="UniProtKB"/>
</dbReference>
<dbReference type="GO" id="GO:0019221">
    <property type="term" value="P:cytokine-mediated signaling pathway"/>
    <property type="evidence" value="ECO:0000250"/>
    <property type="project" value="UniProtKB"/>
</dbReference>
<dbReference type="GO" id="GO:0006952">
    <property type="term" value="P:defense response"/>
    <property type="evidence" value="ECO:0000250"/>
    <property type="project" value="UniProtKB"/>
</dbReference>
<dbReference type="GO" id="GO:0006954">
    <property type="term" value="P:inflammatory response"/>
    <property type="evidence" value="ECO:0000250"/>
    <property type="project" value="UniProtKB"/>
</dbReference>
<dbReference type="GO" id="GO:0050729">
    <property type="term" value="P:positive regulation of inflammatory response"/>
    <property type="evidence" value="ECO:0000250"/>
    <property type="project" value="UniProtKB"/>
</dbReference>
<dbReference type="GO" id="GO:0045944">
    <property type="term" value="P:positive regulation of transcription by RNA polymerase II"/>
    <property type="evidence" value="ECO:0000250"/>
    <property type="project" value="UniProtKB"/>
</dbReference>
<dbReference type="GO" id="GO:0006693">
    <property type="term" value="P:prostaglandin metabolic process"/>
    <property type="evidence" value="ECO:0007669"/>
    <property type="project" value="InterPro"/>
</dbReference>
<dbReference type="CDD" id="cd08313">
    <property type="entry name" value="Death_TNFR1"/>
    <property type="match status" value="1"/>
</dbReference>
<dbReference type="CDD" id="cd10576">
    <property type="entry name" value="TNFRSF1A"/>
    <property type="match status" value="1"/>
</dbReference>
<dbReference type="FunFam" id="1.10.533.10:FF:000044">
    <property type="entry name" value="Tumor necrosis factor receptor superfamily member 1A"/>
    <property type="match status" value="1"/>
</dbReference>
<dbReference type="FunFam" id="2.10.50.10:FF:000020">
    <property type="entry name" value="Tumor necrosis factor receptor superfamily member 1A"/>
    <property type="match status" value="1"/>
</dbReference>
<dbReference type="FunFam" id="2.10.50.10:FF:000025">
    <property type="entry name" value="Tumor necrosis factor receptor superfamily member 1A"/>
    <property type="match status" value="1"/>
</dbReference>
<dbReference type="Gene3D" id="1.10.533.10">
    <property type="entry name" value="Death Domain, Fas"/>
    <property type="match status" value="1"/>
</dbReference>
<dbReference type="Gene3D" id="2.10.50.10">
    <property type="entry name" value="Tumor Necrosis Factor Receptor, subunit A, domain 2"/>
    <property type="match status" value="2"/>
</dbReference>
<dbReference type="InterPro" id="IPR011029">
    <property type="entry name" value="DEATH-like_dom_sf"/>
</dbReference>
<dbReference type="InterPro" id="IPR000488">
    <property type="entry name" value="Death_dom"/>
</dbReference>
<dbReference type="InterPro" id="IPR001368">
    <property type="entry name" value="TNFR/NGFR_Cys_rich_reg"/>
</dbReference>
<dbReference type="InterPro" id="IPR020419">
    <property type="entry name" value="TNFR_1A"/>
</dbReference>
<dbReference type="InterPro" id="IPR052493">
    <property type="entry name" value="TNFRSF1A"/>
</dbReference>
<dbReference type="InterPro" id="IPR033994">
    <property type="entry name" value="TNFRSF1A_death"/>
</dbReference>
<dbReference type="InterPro" id="IPR033993">
    <property type="entry name" value="TNFRSF1A_N"/>
</dbReference>
<dbReference type="PANTHER" id="PTHR46861">
    <property type="entry name" value="TUMOR NECROSIS FACTOR RECEPTOR SUPERFAMILY MEMBER 1A"/>
    <property type="match status" value="1"/>
</dbReference>
<dbReference type="PANTHER" id="PTHR46861:SF1">
    <property type="entry name" value="TUMOR NECROSIS FACTOR RECEPTOR SUPERFAMILY MEMBER 1A"/>
    <property type="match status" value="1"/>
</dbReference>
<dbReference type="Pfam" id="PF00531">
    <property type="entry name" value="Death"/>
    <property type="match status" value="1"/>
</dbReference>
<dbReference type="Pfam" id="PF00020">
    <property type="entry name" value="TNFR_c6"/>
    <property type="match status" value="2"/>
</dbReference>
<dbReference type="PRINTS" id="PR01918">
    <property type="entry name" value="TNFACTORR1A"/>
</dbReference>
<dbReference type="SMART" id="SM00005">
    <property type="entry name" value="DEATH"/>
    <property type="match status" value="1"/>
</dbReference>
<dbReference type="SMART" id="SM00208">
    <property type="entry name" value="TNFR"/>
    <property type="match status" value="3"/>
</dbReference>
<dbReference type="SUPFAM" id="SSF47986">
    <property type="entry name" value="DEATH domain"/>
    <property type="match status" value="1"/>
</dbReference>
<dbReference type="SUPFAM" id="SSF57586">
    <property type="entry name" value="TNF receptor-like"/>
    <property type="match status" value="3"/>
</dbReference>
<dbReference type="PROSITE" id="PS50017">
    <property type="entry name" value="DEATH_DOMAIN"/>
    <property type="match status" value="1"/>
</dbReference>
<dbReference type="PROSITE" id="PS00652">
    <property type="entry name" value="TNFR_NGFR_1"/>
    <property type="match status" value="3"/>
</dbReference>
<dbReference type="PROSITE" id="PS50050">
    <property type="entry name" value="TNFR_NGFR_2"/>
    <property type="match status" value="3"/>
</dbReference>
<feature type="signal peptide" evidence="2">
    <location>
        <begin position="1"/>
        <end position="29"/>
    </location>
</feature>
<feature type="chain" id="PRO_0000034542" description="Tumor necrosis factor receptor superfamily member 1A">
    <location>
        <begin position="30"/>
        <end position="471"/>
    </location>
</feature>
<feature type="topological domain" description="Extracellular" evidence="4">
    <location>
        <begin position="30"/>
        <end position="210"/>
    </location>
</feature>
<feature type="transmembrane region" description="Helical" evidence="4">
    <location>
        <begin position="211"/>
        <end position="233"/>
    </location>
</feature>
<feature type="topological domain" description="Cytoplasmic" evidence="4">
    <location>
        <begin position="234"/>
        <end position="471"/>
    </location>
</feature>
<feature type="repeat" description="TNFR-Cys 1">
    <location>
        <begin position="43"/>
        <end position="82"/>
    </location>
</feature>
<feature type="repeat" description="TNFR-Cys 2">
    <location>
        <begin position="83"/>
        <end position="125"/>
    </location>
</feature>
<feature type="repeat" description="TNFR-Cys 3">
    <location>
        <begin position="126"/>
        <end position="166"/>
    </location>
</feature>
<feature type="repeat" description="TNFR-Cys 4">
    <location>
        <begin position="167"/>
        <end position="195"/>
    </location>
</feature>
<feature type="domain" description="Death" evidence="5">
    <location>
        <begin position="372"/>
        <end position="457"/>
    </location>
</feature>
<feature type="region of interest" description="N-SMase activation domain (NSD)">
    <location>
        <begin position="340"/>
        <end position="360"/>
    </location>
</feature>
<feature type="glycosylation site" description="N-linked (GlcNAc...) asparagine" evidence="4">
    <location>
        <position position="54"/>
    </location>
</feature>
<feature type="glycosylation site" description="N-linked (GlcNAc...) asparagine" evidence="4">
    <location>
        <position position="145"/>
    </location>
</feature>
<feature type="glycosylation site" description="N-linked (GlcNAc...) asparagine" evidence="4">
    <location>
        <position position="151"/>
    </location>
</feature>
<feature type="disulfide bond" evidence="6">
    <location>
        <begin position="44"/>
        <end position="58"/>
    </location>
</feature>
<feature type="disulfide bond" evidence="6">
    <location>
        <begin position="59"/>
        <end position="72"/>
    </location>
</feature>
<feature type="disulfide bond" evidence="6">
    <location>
        <begin position="62"/>
        <end position="81"/>
    </location>
</feature>
<feature type="disulfide bond" evidence="6">
    <location>
        <begin position="84"/>
        <end position="99"/>
    </location>
</feature>
<feature type="disulfide bond" evidence="6">
    <location>
        <begin position="102"/>
        <end position="117"/>
    </location>
</feature>
<feature type="disulfide bond" evidence="6">
    <location>
        <begin position="105"/>
        <end position="125"/>
    </location>
</feature>
<feature type="disulfide bond" evidence="6">
    <location>
        <begin position="127"/>
        <end position="143"/>
    </location>
</feature>
<feature type="disulfide bond" evidence="6">
    <location>
        <begin position="146"/>
        <end position="158"/>
    </location>
</feature>
<feature type="disulfide bond" evidence="6">
    <location>
        <begin position="149"/>
        <end position="166"/>
    </location>
</feature>
<feature type="disulfide bond" evidence="6">
    <location>
        <begin position="168"/>
        <end position="179"/>
    </location>
</feature>
<feature type="disulfide bond" evidence="6">
    <location>
        <begin position="182"/>
        <end position="194"/>
    </location>
</feature>
<feature type="disulfide bond" evidence="6">
    <location>
        <begin position="185"/>
        <end position="190"/>
    </location>
</feature>
<organism>
    <name type="scientific">Bos taurus</name>
    <name type="common">Bovine</name>
    <dbReference type="NCBI Taxonomy" id="9913"/>
    <lineage>
        <taxon>Eukaryota</taxon>
        <taxon>Metazoa</taxon>
        <taxon>Chordata</taxon>
        <taxon>Craniata</taxon>
        <taxon>Vertebrata</taxon>
        <taxon>Euteleostomi</taxon>
        <taxon>Mammalia</taxon>
        <taxon>Eutheria</taxon>
        <taxon>Laurasiatheria</taxon>
        <taxon>Artiodactyla</taxon>
        <taxon>Ruminantia</taxon>
        <taxon>Pecora</taxon>
        <taxon>Bovidae</taxon>
        <taxon>Bovinae</taxon>
        <taxon>Bos</taxon>
    </lineage>
</organism>
<sequence length="471" mass="51368">MGLPTVPGLLLPLVLPALLADVYPAGVQGLVPHPGDLEKRESPCPQGKYNHPQNSTICCTKCHKGTYLYNDCPGPGRDTDCRVCAPGTYTALENHLRRCLSCSRCRDEMFQVEISPCVVDRDTVCGCRKNQYREYWGETGFRCLNCSLCPNGTVNIPCQERQDTICHCHMGFFLKGAKCISCHDCKNKECEKLCPTRPSTGKDSQDPGTTVLLPLVIVFGLCLASFASVVLACRYQRWKPKLYSIICGQSTLVKEGEPELLVPAPGFNPTTTICFSSTPSSSPVSIPPYISCDRSNFGAVASPSSETAPPHLKAGPILPGPPASTHLCTPGPPASTHLCTPGPPASTHLCTPVQKWEASAPSAPDQLADADPATLYAVVDGVPPSRWKELVRRLGLSEHEIERLELENGRHLREAQYSMLAAWRRRTPRREATLELLGRVLRDMDLLGCLENIEEALGGAARLASEPRLLW</sequence>
<gene>
    <name type="primary">TNFRSF1A</name>
    <name type="synonym">TNFR1</name>
</gene>
<name>TNR1A_BOVIN</name>
<comment type="function">
    <text evidence="1">Receptor for TNFSF2/TNF-alpha and homotrimeric TNFSF1/lymphotoxin-alpha. The adapter molecule FADD recruits caspase-8 to the activated receptor. The resulting death-inducing signaling complex (DISC) performs caspase-8 proteolytic activation which initiates the subsequent cascade of caspases (aspartate-specific cysteine proteases) mediating apoptosis (By similarity).</text>
</comment>
<comment type="subunit">
    <text evidence="2 3">Binding of TNF to the extracellular domain leads to homotrimerization. The aggregated death domains provide a novel molecular interface that interacts specifically with the death domain of TRADD. Various TRADD-interacting proteins such as TRAFS, RIPK1 and possibly FADD, are recruited to the complex by their association with TRADD. This complex activates at least two distinct signaling cascades, apoptosis and NF-kappa-B signaling. Interacts with BAG4, BABAM2, FEM1B, GRB2, SQSTM1 and TRPC4AP. Interacts directly with NOL3 (via CARD domain); inhibits TNF-signaling pathway. Interacts with SH3RF2, TRADD and RIPK1. SH3RF2 facilitates the recruitment of RIPK1 and TRADD to TNFRSF1A in a TNF-alpha-dependent process. Interacts with PGLYRP1; this interaction is important for cell death induction. Interacts (via death domain) with MADD (via death domain) (By similarity).</text>
</comment>
<comment type="subcellular location">
    <subcellularLocation>
        <location>Cell membrane</location>
        <topology>Single-pass type I membrane protein</topology>
    </subcellularLocation>
    <subcellularLocation>
        <location evidence="1">Golgi apparatus membrane</location>
        <topology evidence="1">Single-pass type I membrane protein</topology>
    </subcellularLocation>
</comment>
<comment type="domain">
    <text evidence="1">Both the cytoplasmic membrane-proximal region and the C-terminal region containing the death domain are involved in the interaction with TRPC4AP.</text>
</comment>